<evidence type="ECO:0000255" key="1">
    <source>
        <dbReference type="HAMAP-Rule" id="MF_00368"/>
    </source>
</evidence>
<evidence type="ECO:0000305" key="2"/>
<sequence>MACTREDVIEYISNLSVLELSELVKEFEEKFGVSAQPTVVAGAVAAGGAEGGAAAEEKTEFDVVLTDAGPKKINTIKVIRQVTGLGLKEAKEAAENTPTVIKEGVSKEEAEELKKQFEEAGAKVEIK</sequence>
<protein>
    <recommendedName>
        <fullName evidence="1">Large ribosomal subunit protein bL12</fullName>
    </recommendedName>
    <alternativeName>
        <fullName evidence="2">50S ribosomal protein L7/L12</fullName>
    </alternativeName>
</protein>
<gene>
    <name evidence="1" type="primary">rplL</name>
    <name type="ordered locus">NIS_0267</name>
</gene>
<feature type="chain" id="PRO_1000007046" description="Large ribosomal subunit protein bL12">
    <location>
        <begin position="1"/>
        <end position="127"/>
    </location>
</feature>
<comment type="function">
    <text evidence="1">Forms part of the ribosomal stalk which helps the ribosome interact with GTP-bound translation factors. Is thus essential for accurate translation.</text>
</comment>
<comment type="subunit">
    <text evidence="1">Homodimer. Part of the ribosomal stalk of the 50S ribosomal subunit. Forms a multimeric L10(L12)X complex, where L10 forms an elongated spine to which 2 to 4 L12 dimers bind in a sequential fashion. Binds GTP-bound translation factors.</text>
</comment>
<comment type="similarity">
    <text evidence="1">Belongs to the bacterial ribosomal protein bL12 family.</text>
</comment>
<name>RL7_NITSB</name>
<dbReference type="EMBL" id="AP009178">
    <property type="protein sequence ID" value="BAF69381.1"/>
    <property type="molecule type" value="Genomic_DNA"/>
</dbReference>
<dbReference type="RefSeq" id="WP_012081644.1">
    <property type="nucleotide sequence ID" value="NC_009662.1"/>
</dbReference>
<dbReference type="SMR" id="A6Q1M2"/>
<dbReference type="FunCoup" id="A6Q1M2">
    <property type="interactions" value="512"/>
</dbReference>
<dbReference type="STRING" id="387092.NIS_0267"/>
<dbReference type="KEGG" id="nis:NIS_0267"/>
<dbReference type="eggNOG" id="COG0222">
    <property type="taxonomic scope" value="Bacteria"/>
</dbReference>
<dbReference type="HOGENOM" id="CLU_086499_3_2_7"/>
<dbReference type="InParanoid" id="A6Q1M2"/>
<dbReference type="OrthoDB" id="9811748at2"/>
<dbReference type="Proteomes" id="UP000001118">
    <property type="component" value="Chromosome"/>
</dbReference>
<dbReference type="GO" id="GO:0022625">
    <property type="term" value="C:cytosolic large ribosomal subunit"/>
    <property type="evidence" value="ECO:0007669"/>
    <property type="project" value="TreeGrafter"/>
</dbReference>
<dbReference type="GO" id="GO:0003729">
    <property type="term" value="F:mRNA binding"/>
    <property type="evidence" value="ECO:0007669"/>
    <property type="project" value="TreeGrafter"/>
</dbReference>
<dbReference type="GO" id="GO:0003735">
    <property type="term" value="F:structural constituent of ribosome"/>
    <property type="evidence" value="ECO:0007669"/>
    <property type="project" value="InterPro"/>
</dbReference>
<dbReference type="GO" id="GO:0006412">
    <property type="term" value="P:translation"/>
    <property type="evidence" value="ECO:0007669"/>
    <property type="project" value="UniProtKB-UniRule"/>
</dbReference>
<dbReference type="CDD" id="cd00387">
    <property type="entry name" value="Ribosomal_L7_L12"/>
    <property type="match status" value="1"/>
</dbReference>
<dbReference type="FunFam" id="3.30.1390.10:FF:000001">
    <property type="entry name" value="50S ribosomal protein L7/L12"/>
    <property type="match status" value="1"/>
</dbReference>
<dbReference type="Gene3D" id="3.30.1390.10">
    <property type="match status" value="1"/>
</dbReference>
<dbReference type="Gene3D" id="1.20.5.710">
    <property type="entry name" value="Single helix bin"/>
    <property type="match status" value="1"/>
</dbReference>
<dbReference type="HAMAP" id="MF_00368">
    <property type="entry name" value="Ribosomal_bL12"/>
    <property type="match status" value="1"/>
</dbReference>
<dbReference type="InterPro" id="IPR000206">
    <property type="entry name" value="Ribosomal_bL12"/>
</dbReference>
<dbReference type="InterPro" id="IPR013823">
    <property type="entry name" value="Ribosomal_bL12_C"/>
</dbReference>
<dbReference type="InterPro" id="IPR014719">
    <property type="entry name" value="Ribosomal_bL12_C/ClpS-like"/>
</dbReference>
<dbReference type="InterPro" id="IPR008932">
    <property type="entry name" value="Ribosomal_bL12_oligo"/>
</dbReference>
<dbReference type="InterPro" id="IPR036235">
    <property type="entry name" value="Ribosomal_bL12_oligo_N_sf"/>
</dbReference>
<dbReference type="NCBIfam" id="TIGR00855">
    <property type="entry name" value="L12"/>
    <property type="match status" value="1"/>
</dbReference>
<dbReference type="PANTHER" id="PTHR45987">
    <property type="entry name" value="39S RIBOSOMAL PROTEIN L12"/>
    <property type="match status" value="1"/>
</dbReference>
<dbReference type="PANTHER" id="PTHR45987:SF4">
    <property type="entry name" value="LARGE RIBOSOMAL SUBUNIT PROTEIN BL12M"/>
    <property type="match status" value="1"/>
</dbReference>
<dbReference type="Pfam" id="PF00542">
    <property type="entry name" value="Ribosomal_L12"/>
    <property type="match status" value="1"/>
</dbReference>
<dbReference type="Pfam" id="PF16320">
    <property type="entry name" value="Ribosomal_L12_N"/>
    <property type="match status" value="1"/>
</dbReference>
<dbReference type="SUPFAM" id="SSF54736">
    <property type="entry name" value="ClpS-like"/>
    <property type="match status" value="1"/>
</dbReference>
<dbReference type="SUPFAM" id="SSF48300">
    <property type="entry name" value="Ribosomal protein L7/12, oligomerisation (N-terminal) domain"/>
    <property type="match status" value="1"/>
</dbReference>
<organism>
    <name type="scientific">Nitratiruptor sp. (strain SB155-2)</name>
    <dbReference type="NCBI Taxonomy" id="387092"/>
    <lineage>
        <taxon>Bacteria</taxon>
        <taxon>Pseudomonadati</taxon>
        <taxon>Campylobacterota</taxon>
        <taxon>Epsilonproteobacteria</taxon>
        <taxon>Nautiliales</taxon>
        <taxon>Nitratiruptoraceae</taxon>
        <taxon>Nitratiruptor</taxon>
    </lineage>
</organism>
<proteinExistence type="inferred from homology"/>
<keyword id="KW-1185">Reference proteome</keyword>
<keyword id="KW-0687">Ribonucleoprotein</keyword>
<keyword id="KW-0689">Ribosomal protein</keyword>
<accession>A6Q1M2</accession>
<reference key="1">
    <citation type="journal article" date="2007" name="Proc. Natl. Acad. Sci. U.S.A.">
        <title>Deep-sea vent epsilon-proteobacterial genomes provide insights into emergence of pathogens.</title>
        <authorList>
            <person name="Nakagawa S."/>
            <person name="Takaki Y."/>
            <person name="Shimamura S."/>
            <person name="Reysenbach A.-L."/>
            <person name="Takai K."/>
            <person name="Horikoshi K."/>
        </authorList>
    </citation>
    <scope>NUCLEOTIDE SEQUENCE [LARGE SCALE GENOMIC DNA]</scope>
    <source>
        <strain>SB155-2</strain>
    </source>
</reference>